<organism>
    <name type="scientific">Stenella frontalis</name>
    <name type="common">Atlantic spotted dolphin</name>
    <name type="synonym">Delphinus frontalis</name>
    <dbReference type="NCBI Taxonomy" id="103590"/>
    <lineage>
        <taxon>Eukaryota</taxon>
        <taxon>Metazoa</taxon>
        <taxon>Chordata</taxon>
        <taxon>Craniata</taxon>
        <taxon>Vertebrata</taxon>
        <taxon>Euteleostomi</taxon>
        <taxon>Mammalia</taxon>
        <taxon>Eutheria</taxon>
        <taxon>Laurasiatheria</taxon>
        <taxon>Artiodactyla</taxon>
        <taxon>Whippomorpha</taxon>
        <taxon>Cetacea</taxon>
        <taxon>Odontoceti</taxon>
        <taxon>Delphinidae</taxon>
        <taxon>Stenella</taxon>
    </lineage>
</organism>
<protein>
    <recommendedName>
        <fullName>Cytochrome b</fullName>
    </recommendedName>
    <alternativeName>
        <fullName>Complex III subunit 3</fullName>
    </alternativeName>
    <alternativeName>
        <fullName>Complex III subunit III</fullName>
    </alternativeName>
    <alternativeName>
        <fullName>Cytochrome b-c1 complex subunit 3</fullName>
    </alternativeName>
    <alternativeName>
        <fullName>Ubiquinol-cytochrome-c reductase complex cytochrome b subunit</fullName>
    </alternativeName>
</protein>
<gene>
    <name type="primary">MT-CYB</name>
    <name type="synonym">COB</name>
    <name type="synonym">CYTB</name>
    <name type="synonym">MTCYB</name>
</gene>
<reference key="1">
    <citation type="journal article" date="1999" name="Mar. Mamm. Sci.">
        <title>Phylogenetic relationships among the delphinid cetaceans based on full cytochrome b sequences.</title>
        <authorList>
            <person name="LeDuc R.G."/>
            <person name="Perrin W.F."/>
            <person name="Dizon A.E."/>
        </authorList>
    </citation>
    <scope>NUCLEOTIDE SEQUENCE [GENOMIC DNA]</scope>
</reference>
<feature type="chain" id="PRO_0000061615" description="Cytochrome b">
    <location>
        <begin position="1"/>
        <end position="379"/>
    </location>
</feature>
<feature type="transmembrane region" description="Helical" evidence="2">
    <location>
        <begin position="33"/>
        <end position="53"/>
    </location>
</feature>
<feature type="transmembrane region" description="Helical" evidence="2">
    <location>
        <begin position="77"/>
        <end position="98"/>
    </location>
</feature>
<feature type="transmembrane region" description="Helical" evidence="2">
    <location>
        <begin position="113"/>
        <end position="133"/>
    </location>
</feature>
<feature type="transmembrane region" description="Helical" evidence="2">
    <location>
        <begin position="178"/>
        <end position="198"/>
    </location>
</feature>
<feature type="transmembrane region" description="Helical" evidence="2">
    <location>
        <begin position="226"/>
        <end position="246"/>
    </location>
</feature>
<feature type="transmembrane region" description="Helical" evidence="2">
    <location>
        <begin position="288"/>
        <end position="308"/>
    </location>
</feature>
<feature type="transmembrane region" description="Helical" evidence="2">
    <location>
        <begin position="320"/>
        <end position="340"/>
    </location>
</feature>
<feature type="transmembrane region" description="Helical" evidence="2">
    <location>
        <begin position="347"/>
        <end position="367"/>
    </location>
</feature>
<feature type="binding site" description="axial binding residue" evidence="2">
    <location>
        <position position="83"/>
    </location>
    <ligand>
        <name>heme b</name>
        <dbReference type="ChEBI" id="CHEBI:60344"/>
        <label>b562</label>
    </ligand>
    <ligandPart>
        <name>Fe</name>
        <dbReference type="ChEBI" id="CHEBI:18248"/>
    </ligandPart>
</feature>
<feature type="binding site" description="axial binding residue" evidence="2">
    <location>
        <position position="97"/>
    </location>
    <ligand>
        <name>heme b</name>
        <dbReference type="ChEBI" id="CHEBI:60344"/>
        <label>b566</label>
    </ligand>
    <ligandPart>
        <name>Fe</name>
        <dbReference type="ChEBI" id="CHEBI:18248"/>
    </ligandPart>
</feature>
<feature type="binding site" description="axial binding residue" evidence="2">
    <location>
        <position position="182"/>
    </location>
    <ligand>
        <name>heme b</name>
        <dbReference type="ChEBI" id="CHEBI:60344"/>
        <label>b562</label>
    </ligand>
    <ligandPart>
        <name>Fe</name>
        <dbReference type="ChEBI" id="CHEBI:18248"/>
    </ligandPart>
</feature>
<feature type="binding site" description="axial binding residue" evidence="2">
    <location>
        <position position="196"/>
    </location>
    <ligand>
        <name>heme b</name>
        <dbReference type="ChEBI" id="CHEBI:60344"/>
        <label>b566</label>
    </ligand>
    <ligandPart>
        <name>Fe</name>
        <dbReference type="ChEBI" id="CHEBI:18248"/>
    </ligandPart>
</feature>
<feature type="binding site" evidence="2">
    <location>
        <position position="201"/>
    </location>
    <ligand>
        <name>a ubiquinone</name>
        <dbReference type="ChEBI" id="CHEBI:16389"/>
    </ligand>
</feature>
<proteinExistence type="inferred from homology"/>
<comment type="function">
    <text evidence="2">Component of the ubiquinol-cytochrome c reductase complex (complex III or cytochrome b-c1 complex) that is part of the mitochondrial respiratory chain. The b-c1 complex mediates electron transfer from ubiquinol to cytochrome c. Contributes to the generation of a proton gradient across the mitochondrial membrane that is then used for ATP synthesis.</text>
</comment>
<comment type="cofactor">
    <cofactor evidence="2">
        <name>heme b</name>
        <dbReference type="ChEBI" id="CHEBI:60344"/>
    </cofactor>
    <text evidence="2">Binds 2 heme b groups non-covalently.</text>
</comment>
<comment type="subunit">
    <text evidence="2">The cytochrome bc1 complex contains 11 subunits: 3 respiratory subunits (MT-CYB, CYC1 and UQCRFS1), 2 core proteins (UQCRC1 and UQCRC2) and 6 low-molecular weight proteins (UQCRH/QCR6, UQCRB/QCR7, UQCRQ/QCR8, UQCR10/QCR9, UQCR11/QCR10 and a cleavage product of UQCRFS1). This cytochrome bc1 complex then forms a dimer.</text>
</comment>
<comment type="subcellular location">
    <subcellularLocation>
        <location evidence="2">Mitochondrion inner membrane</location>
        <topology evidence="2">Multi-pass membrane protein</topology>
    </subcellularLocation>
</comment>
<comment type="miscellaneous">
    <text evidence="1">Heme 1 (or BL or b562) is low-potential and absorbs at about 562 nm, and heme 2 (or BH or b566) is high-potential and absorbs at about 566 nm.</text>
</comment>
<comment type="similarity">
    <text evidence="3 4">Belongs to the cytochrome b family.</text>
</comment>
<comment type="caution">
    <text evidence="2">The full-length protein contains only eight transmembrane helices, not nine as predicted by bioinformatics tools.</text>
</comment>
<geneLocation type="mitochondrion"/>
<name>CYB_STEFR</name>
<evidence type="ECO:0000250" key="1"/>
<evidence type="ECO:0000250" key="2">
    <source>
        <dbReference type="UniProtKB" id="P00157"/>
    </source>
</evidence>
<evidence type="ECO:0000255" key="3">
    <source>
        <dbReference type="PROSITE-ProRule" id="PRU00967"/>
    </source>
</evidence>
<evidence type="ECO:0000255" key="4">
    <source>
        <dbReference type="PROSITE-ProRule" id="PRU00968"/>
    </source>
</evidence>
<sequence length="379" mass="42698">MTNIRKTHPLMKILNDAFIDLPTPSNISSWWNFGSLLGLCLIMQILTGLFLAMHYTPDTSTAFSSVAHICRDVNYGWFIRYLHANGASMFFICLYAHIGRGLYYGSYMFQETWNIGVLLLLTVMATAFVGYVLPWGQMSFWGATVITNLLSAIPYIGTTLVEWIWGGFSVDKATLTRFFAFHFILPFIITALAAVHLLFLHETGSNNPTGIPSNMDMIPFHPYYTIKDILGALLLILTLLALTLFTPDLLGDPDNYTPANPLSTPAHIKPEWYFLFAYAILRSIPNKLGGVLALLLSILVLIFIPMLQTSKQRSMMFRPFSQLLFWTLIADLLTLTWIGGQPVEHPYIIVGQLASILYFLLILVLMPTAGLIENKLLKW</sequence>
<keyword id="KW-0249">Electron transport</keyword>
<keyword id="KW-0349">Heme</keyword>
<keyword id="KW-0408">Iron</keyword>
<keyword id="KW-0472">Membrane</keyword>
<keyword id="KW-0479">Metal-binding</keyword>
<keyword id="KW-0496">Mitochondrion</keyword>
<keyword id="KW-0999">Mitochondrion inner membrane</keyword>
<keyword id="KW-0679">Respiratory chain</keyword>
<keyword id="KW-0812">Transmembrane</keyword>
<keyword id="KW-1133">Transmembrane helix</keyword>
<keyword id="KW-0813">Transport</keyword>
<keyword id="KW-0830">Ubiquinone</keyword>
<accession>P68095</accession>
<accession>P24961</accession>
<accession>Q9T3G9</accession>
<dbReference type="EMBL" id="AF084089">
    <property type="protein sequence ID" value="AAD54466.1"/>
    <property type="molecule type" value="Genomic_DNA"/>
</dbReference>
<dbReference type="EMBL" id="AF084090">
    <property type="protein sequence ID" value="AAD54467.1"/>
    <property type="molecule type" value="Genomic_DNA"/>
</dbReference>
<dbReference type="SMR" id="P68095"/>
<dbReference type="GO" id="GO:0005743">
    <property type="term" value="C:mitochondrial inner membrane"/>
    <property type="evidence" value="ECO:0007669"/>
    <property type="project" value="UniProtKB-SubCell"/>
</dbReference>
<dbReference type="GO" id="GO:0045275">
    <property type="term" value="C:respiratory chain complex III"/>
    <property type="evidence" value="ECO:0007669"/>
    <property type="project" value="InterPro"/>
</dbReference>
<dbReference type="GO" id="GO:0046872">
    <property type="term" value="F:metal ion binding"/>
    <property type="evidence" value="ECO:0007669"/>
    <property type="project" value="UniProtKB-KW"/>
</dbReference>
<dbReference type="GO" id="GO:0008121">
    <property type="term" value="F:ubiquinol-cytochrome-c reductase activity"/>
    <property type="evidence" value="ECO:0007669"/>
    <property type="project" value="InterPro"/>
</dbReference>
<dbReference type="GO" id="GO:0006122">
    <property type="term" value="P:mitochondrial electron transport, ubiquinol to cytochrome c"/>
    <property type="evidence" value="ECO:0007669"/>
    <property type="project" value="TreeGrafter"/>
</dbReference>
<dbReference type="CDD" id="cd00290">
    <property type="entry name" value="cytochrome_b_C"/>
    <property type="match status" value="1"/>
</dbReference>
<dbReference type="CDD" id="cd00284">
    <property type="entry name" value="Cytochrome_b_N"/>
    <property type="match status" value="1"/>
</dbReference>
<dbReference type="FunFam" id="1.20.810.10:FF:000002">
    <property type="entry name" value="Cytochrome b"/>
    <property type="match status" value="1"/>
</dbReference>
<dbReference type="Gene3D" id="1.20.810.10">
    <property type="entry name" value="Cytochrome Bc1 Complex, Chain C"/>
    <property type="match status" value="1"/>
</dbReference>
<dbReference type="InterPro" id="IPR005798">
    <property type="entry name" value="Cyt_b/b6_C"/>
</dbReference>
<dbReference type="InterPro" id="IPR036150">
    <property type="entry name" value="Cyt_b/b6_C_sf"/>
</dbReference>
<dbReference type="InterPro" id="IPR005797">
    <property type="entry name" value="Cyt_b/b6_N"/>
</dbReference>
<dbReference type="InterPro" id="IPR027387">
    <property type="entry name" value="Cytb/b6-like_sf"/>
</dbReference>
<dbReference type="InterPro" id="IPR030689">
    <property type="entry name" value="Cytochrome_b"/>
</dbReference>
<dbReference type="InterPro" id="IPR048260">
    <property type="entry name" value="Cytochrome_b_C_euk/bac"/>
</dbReference>
<dbReference type="InterPro" id="IPR048259">
    <property type="entry name" value="Cytochrome_b_N_euk/bac"/>
</dbReference>
<dbReference type="InterPro" id="IPR016174">
    <property type="entry name" value="Di-haem_cyt_TM"/>
</dbReference>
<dbReference type="PANTHER" id="PTHR19271">
    <property type="entry name" value="CYTOCHROME B"/>
    <property type="match status" value="1"/>
</dbReference>
<dbReference type="PANTHER" id="PTHR19271:SF16">
    <property type="entry name" value="CYTOCHROME B"/>
    <property type="match status" value="1"/>
</dbReference>
<dbReference type="Pfam" id="PF00032">
    <property type="entry name" value="Cytochrom_B_C"/>
    <property type="match status" value="1"/>
</dbReference>
<dbReference type="Pfam" id="PF00033">
    <property type="entry name" value="Cytochrome_B"/>
    <property type="match status" value="1"/>
</dbReference>
<dbReference type="PIRSF" id="PIRSF038885">
    <property type="entry name" value="COB"/>
    <property type="match status" value="1"/>
</dbReference>
<dbReference type="SUPFAM" id="SSF81648">
    <property type="entry name" value="a domain/subunit of cytochrome bc1 complex (Ubiquinol-cytochrome c reductase)"/>
    <property type="match status" value="1"/>
</dbReference>
<dbReference type="SUPFAM" id="SSF81342">
    <property type="entry name" value="Transmembrane di-heme cytochromes"/>
    <property type="match status" value="1"/>
</dbReference>
<dbReference type="PROSITE" id="PS51003">
    <property type="entry name" value="CYTB_CTER"/>
    <property type="match status" value="1"/>
</dbReference>
<dbReference type="PROSITE" id="PS51002">
    <property type="entry name" value="CYTB_NTER"/>
    <property type="match status" value="1"/>
</dbReference>